<reference key="1">
    <citation type="journal article" date="2011" name="J. Bacteriol.">
        <title>Genome sequence of lineage III Listeria monocytogenes strain HCC23.</title>
        <authorList>
            <person name="Steele C.L."/>
            <person name="Donaldson J.R."/>
            <person name="Paul D."/>
            <person name="Banes M.M."/>
            <person name="Arick T."/>
            <person name="Bridges S.M."/>
            <person name="Lawrence M.L."/>
        </authorList>
    </citation>
    <scope>NUCLEOTIDE SEQUENCE [LARGE SCALE GENOMIC DNA]</scope>
    <source>
        <strain>HCC23</strain>
    </source>
</reference>
<gene>
    <name evidence="1" type="primary">queA</name>
    <name type="ordered locus">LMHCC_1038</name>
</gene>
<name>QUEA_LISMH</name>
<keyword id="KW-0963">Cytoplasm</keyword>
<keyword id="KW-0671">Queuosine biosynthesis</keyword>
<keyword id="KW-0949">S-adenosyl-L-methionine</keyword>
<keyword id="KW-0808">Transferase</keyword>
<feature type="chain" id="PRO_1000119157" description="S-adenosylmethionine:tRNA ribosyltransferase-isomerase">
    <location>
        <begin position="1"/>
        <end position="342"/>
    </location>
</feature>
<sequence length="342" mass="38199">MKVEDFDFDLPEELIAQTPLLDRTSSRLMVLDKESGDIKDQHFTDIISYLNEGDALVLNDTRVLPARLHGIKDETGAHIEVLLLKQKEGNAWETLVKPAKRIRKGATITFGDGALKATCLEELEHGGRILEFSYEGIFYEVLEQLGEMPLPPYIKEQLADQDRYQTVYAKENGSAAAPTAGLHFTEDLLAKISAKGVEIIFVTLHVGLGTFRPVDVEDTANHKMHSEFYRLTEESAERINKIKVQGGKVVAVGTTSIRTLETIASRHDGKLVAESGWTEIFISPGYTFQAVDALITNFHLPKSTLIMLVSALSDRTKILAAYNHAVEQQYRFFSFGDAMFIH</sequence>
<proteinExistence type="inferred from homology"/>
<accession>B8DHL7</accession>
<dbReference type="EC" id="2.4.99.17" evidence="1"/>
<dbReference type="EMBL" id="CP001175">
    <property type="protein sequence ID" value="ACK39386.1"/>
    <property type="molecule type" value="Genomic_DNA"/>
</dbReference>
<dbReference type="RefSeq" id="WP_012581278.1">
    <property type="nucleotide sequence ID" value="NC_011660.1"/>
</dbReference>
<dbReference type="SMR" id="B8DHL7"/>
<dbReference type="KEGG" id="lmh:LMHCC_1038"/>
<dbReference type="HOGENOM" id="CLU_039110_1_0_9"/>
<dbReference type="UniPathway" id="UPA00392"/>
<dbReference type="GO" id="GO:0005737">
    <property type="term" value="C:cytoplasm"/>
    <property type="evidence" value="ECO:0007669"/>
    <property type="project" value="UniProtKB-SubCell"/>
</dbReference>
<dbReference type="GO" id="GO:0051075">
    <property type="term" value="F:S-adenosylmethionine:tRNA ribosyltransferase-isomerase activity"/>
    <property type="evidence" value="ECO:0007669"/>
    <property type="project" value="UniProtKB-EC"/>
</dbReference>
<dbReference type="GO" id="GO:0008616">
    <property type="term" value="P:queuosine biosynthetic process"/>
    <property type="evidence" value="ECO:0007669"/>
    <property type="project" value="UniProtKB-UniRule"/>
</dbReference>
<dbReference type="GO" id="GO:0002099">
    <property type="term" value="P:tRNA wobble guanine modification"/>
    <property type="evidence" value="ECO:0007669"/>
    <property type="project" value="TreeGrafter"/>
</dbReference>
<dbReference type="FunFam" id="2.40.10.240:FF:000002">
    <property type="entry name" value="S-adenosylmethionine:tRNA ribosyltransferase-isomerase"/>
    <property type="match status" value="1"/>
</dbReference>
<dbReference type="FunFam" id="3.40.1780.10:FF:000001">
    <property type="entry name" value="S-adenosylmethionine:tRNA ribosyltransferase-isomerase"/>
    <property type="match status" value="1"/>
</dbReference>
<dbReference type="Gene3D" id="2.40.10.240">
    <property type="entry name" value="QueA-like"/>
    <property type="match status" value="1"/>
</dbReference>
<dbReference type="Gene3D" id="3.40.1780.10">
    <property type="entry name" value="QueA-like"/>
    <property type="match status" value="1"/>
</dbReference>
<dbReference type="HAMAP" id="MF_00113">
    <property type="entry name" value="QueA"/>
    <property type="match status" value="1"/>
</dbReference>
<dbReference type="InterPro" id="IPR003699">
    <property type="entry name" value="QueA"/>
</dbReference>
<dbReference type="InterPro" id="IPR042118">
    <property type="entry name" value="QueA_dom1"/>
</dbReference>
<dbReference type="InterPro" id="IPR042119">
    <property type="entry name" value="QueA_dom2"/>
</dbReference>
<dbReference type="InterPro" id="IPR036100">
    <property type="entry name" value="QueA_sf"/>
</dbReference>
<dbReference type="NCBIfam" id="NF001140">
    <property type="entry name" value="PRK00147.1"/>
    <property type="match status" value="1"/>
</dbReference>
<dbReference type="NCBIfam" id="TIGR00113">
    <property type="entry name" value="queA"/>
    <property type="match status" value="1"/>
</dbReference>
<dbReference type="PANTHER" id="PTHR30307">
    <property type="entry name" value="S-ADENOSYLMETHIONINE:TRNA RIBOSYLTRANSFERASE-ISOMERASE"/>
    <property type="match status" value="1"/>
</dbReference>
<dbReference type="PANTHER" id="PTHR30307:SF0">
    <property type="entry name" value="S-ADENOSYLMETHIONINE:TRNA RIBOSYLTRANSFERASE-ISOMERASE"/>
    <property type="match status" value="1"/>
</dbReference>
<dbReference type="Pfam" id="PF02547">
    <property type="entry name" value="Queuosine_synth"/>
    <property type="match status" value="1"/>
</dbReference>
<dbReference type="SUPFAM" id="SSF111337">
    <property type="entry name" value="QueA-like"/>
    <property type="match status" value="1"/>
</dbReference>
<evidence type="ECO:0000255" key="1">
    <source>
        <dbReference type="HAMAP-Rule" id="MF_00113"/>
    </source>
</evidence>
<organism>
    <name type="scientific">Listeria monocytogenes serotype 4a (strain HCC23)</name>
    <dbReference type="NCBI Taxonomy" id="552536"/>
    <lineage>
        <taxon>Bacteria</taxon>
        <taxon>Bacillati</taxon>
        <taxon>Bacillota</taxon>
        <taxon>Bacilli</taxon>
        <taxon>Bacillales</taxon>
        <taxon>Listeriaceae</taxon>
        <taxon>Listeria</taxon>
    </lineage>
</organism>
<comment type="function">
    <text evidence="1">Transfers and isomerizes the ribose moiety from AdoMet to the 7-aminomethyl group of 7-deazaguanine (preQ1-tRNA) to give epoxyqueuosine (oQ-tRNA).</text>
</comment>
<comment type="catalytic activity">
    <reaction evidence="1">
        <text>7-aminomethyl-7-carbaguanosine(34) in tRNA + S-adenosyl-L-methionine = epoxyqueuosine(34) in tRNA + adenine + L-methionine + 2 H(+)</text>
        <dbReference type="Rhea" id="RHEA:32155"/>
        <dbReference type="Rhea" id="RHEA-COMP:10342"/>
        <dbReference type="Rhea" id="RHEA-COMP:18582"/>
        <dbReference type="ChEBI" id="CHEBI:15378"/>
        <dbReference type="ChEBI" id="CHEBI:16708"/>
        <dbReference type="ChEBI" id="CHEBI:57844"/>
        <dbReference type="ChEBI" id="CHEBI:59789"/>
        <dbReference type="ChEBI" id="CHEBI:82833"/>
        <dbReference type="ChEBI" id="CHEBI:194443"/>
        <dbReference type="EC" id="2.4.99.17"/>
    </reaction>
</comment>
<comment type="pathway">
    <text evidence="1">tRNA modification; tRNA-queuosine biosynthesis.</text>
</comment>
<comment type="subunit">
    <text evidence="1">Monomer.</text>
</comment>
<comment type="subcellular location">
    <subcellularLocation>
        <location evidence="1">Cytoplasm</location>
    </subcellularLocation>
</comment>
<comment type="similarity">
    <text evidence="1">Belongs to the QueA family.</text>
</comment>
<protein>
    <recommendedName>
        <fullName evidence="1">S-adenosylmethionine:tRNA ribosyltransferase-isomerase</fullName>
        <ecNumber evidence="1">2.4.99.17</ecNumber>
    </recommendedName>
    <alternativeName>
        <fullName evidence="1">Queuosine biosynthesis protein QueA</fullName>
    </alternativeName>
</protein>